<dbReference type="EMBL" id="AY014797">
    <property type="protein sequence ID" value="AAG61154.1"/>
    <property type="molecule type" value="mRNA"/>
</dbReference>
<dbReference type="EMBL" id="AC012563">
    <property type="protein sequence ID" value="AAG52011.1"/>
    <property type="molecule type" value="Genomic_DNA"/>
</dbReference>
<dbReference type="EMBL" id="CP002684">
    <property type="protein sequence ID" value="AEE34748.1"/>
    <property type="molecule type" value="Genomic_DNA"/>
</dbReference>
<dbReference type="EMBL" id="DQ446409">
    <property type="protein sequence ID" value="ABE65753.1"/>
    <property type="molecule type" value="mRNA"/>
</dbReference>
<dbReference type="EMBL" id="DQ652921">
    <property type="protein sequence ID" value="ABK28456.1"/>
    <property type="status" value="ALT_SEQ"/>
    <property type="molecule type" value="mRNA"/>
</dbReference>
<dbReference type="PIR" id="B96704">
    <property type="entry name" value="B96704"/>
</dbReference>
<dbReference type="RefSeq" id="NP_564920.1">
    <property type="nucleotide sequence ID" value="NM_105479.2"/>
</dbReference>
<dbReference type="SMR" id="Q9C9X3"/>
<dbReference type="BioGRID" id="28358">
    <property type="interactions" value="6"/>
</dbReference>
<dbReference type="FunCoup" id="Q9C9X3">
    <property type="interactions" value="918"/>
</dbReference>
<dbReference type="IntAct" id="Q9C9X3">
    <property type="interactions" value="4"/>
</dbReference>
<dbReference type="STRING" id="3702.Q9C9X3"/>
<dbReference type="PaxDb" id="3702-AT1G68090.1"/>
<dbReference type="ProteomicsDB" id="240595"/>
<dbReference type="EnsemblPlants" id="AT1G68090.1">
    <property type="protein sequence ID" value="AT1G68090.1"/>
    <property type="gene ID" value="AT1G68090"/>
</dbReference>
<dbReference type="GeneID" id="843137"/>
<dbReference type="Gramene" id="AT1G68090.1">
    <property type="protein sequence ID" value="AT1G68090.1"/>
    <property type="gene ID" value="AT1G68090"/>
</dbReference>
<dbReference type="KEGG" id="ath:AT1G68090"/>
<dbReference type="Araport" id="AT1G68090"/>
<dbReference type="TAIR" id="AT1G68090">
    <property type="gene designation" value="ANN5"/>
</dbReference>
<dbReference type="eggNOG" id="KOG0819">
    <property type="taxonomic scope" value="Eukaryota"/>
</dbReference>
<dbReference type="HOGENOM" id="CLU_025300_0_1_1"/>
<dbReference type="InParanoid" id="Q9C9X3"/>
<dbReference type="OMA" id="NEIIAGC"/>
<dbReference type="PhylomeDB" id="Q9C9X3"/>
<dbReference type="PRO" id="PR:Q9C9X3"/>
<dbReference type="Proteomes" id="UP000006548">
    <property type="component" value="Chromosome 1"/>
</dbReference>
<dbReference type="ExpressionAtlas" id="Q9C9X3">
    <property type="expression patterns" value="baseline and differential"/>
</dbReference>
<dbReference type="GO" id="GO:0051015">
    <property type="term" value="F:actin filament binding"/>
    <property type="evidence" value="ECO:0000314"/>
    <property type="project" value="TAIR"/>
</dbReference>
<dbReference type="GO" id="GO:0005509">
    <property type="term" value="F:calcium ion binding"/>
    <property type="evidence" value="ECO:0000314"/>
    <property type="project" value="TAIR"/>
</dbReference>
<dbReference type="GO" id="GO:0005544">
    <property type="term" value="F:calcium-dependent phospholipid binding"/>
    <property type="evidence" value="ECO:0007669"/>
    <property type="project" value="UniProtKB-KW"/>
</dbReference>
<dbReference type="GO" id="GO:0005543">
    <property type="term" value="F:phospholipid binding"/>
    <property type="evidence" value="ECO:0000314"/>
    <property type="project" value="TAIR"/>
</dbReference>
<dbReference type="GO" id="GO:0009555">
    <property type="term" value="P:pollen development"/>
    <property type="evidence" value="ECO:0000315"/>
    <property type="project" value="TAIR"/>
</dbReference>
<dbReference type="GO" id="GO:0009846">
    <property type="term" value="P:pollen germination"/>
    <property type="evidence" value="ECO:0000315"/>
    <property type="project" value="TAIR"/>
</dbReference>
<dbReference type="GO" id="GO:0009860">
    <property type="term" value="P:pollen tube growth"/>
    <property type="evidence" value="ECO:0000315"/>
    <property type="project" value="TAIR"/>
</dbReference>
<dbReference type="GO" id="GO:0009409">
    <property type="term" value="P:response to cold"/>
    <property type="evidence" value="ECO:0000270"/>
    <property type="project" value="TAIR"/>
</dbReference>
<dbReference type="GO" id="GO:0009408">
    <property type="term" value="P:response to heat"/>
    <property type="evidence" value="ECO:0000270"/>
    <property type="project" value="TAIR"/>
</dbReference>
<dbReference type="GO" id="GO:0009639">
    <property type="term" value="P:response to red or far red light"/>
    <property type="evidence" value="ECO:0000270"/>
    <property type="project" value="TAIR"/>
</dbReference>
<dbReference type="GO" id="GO:0009651">
    <property type="term" value="P:response to salt stress"/>
    <property type="evidence" value="ECO:0000270"/>
    <property type="project" value="TAIR"/>
</dbReference>
<dbReference type="GO" id="GO:0009414">
    <property type="term" value="P:response to water deprivation"/>
    <property type="evidence" value="ECO:0000270"/>
    <property type="project" value="TAIR"/>
</dbReference>
<dbReference type="FunFam" id="1.10.220.10:FF:000001">
    <property type="entry name" value="Annexin"/>
    <property type="match status" value="1"/>
</dbReference>
<dbReference type="FunFam" id="1.10.220.10:FF:000002">
    <property type="entry name" value="Annexin"/>
    <property type="match status" value="1"/>
</dbReference>
<dbReference type="FunFam" id="1.10.220.10:FF:000008">
    <property type="entry name" value="Annexin"/>
    <property type="match status" value="1"/>
</dbReference>
<dbReference type="Gene3D" id="1.10.220.10">
    <property type="entry name" value="Annexin"/>
    <property type="match status" value="4"/>
</dbReference>
<dbReference type="InterPro" id="IPR001464">
    <property type="entry name" value="Annexin"/>
</dbReference>
<dbReference type="InterPro" id="IPR018502">
    <property type="entry name" value="Annexin_repeat"/>
</dbReference>
<dbReference type="InterPro" id="IPR018252">
    <property type="entry name" value="Annexin_repeat_CS"/>
</dbReference>
<dbReference type="InterPro" id="IPR037104">
    <property type="entry name" value="Annexin_sf"/>
</dbReference>
<dbReference type="PANTHER" id="PTHR10502">
    <property type="entry name" value="ANNEXIN"/>
    <property type="match status" value="1"/>
</dbReference>
<dbReference type="PANTHER" id="PTHR10502:SF241">
    <property type="entry name" value="ANNEXIN D5"/>
    <property type="match status" value="1"/>
</dbReference>
<dbReference type="Pfam" id="PF00191">
    <property type="entry name" value="Annexin"/>
    <property type="match status" value="4"/>
</dbReference>
<dbReference type="PRINTS" id="PR00196">
    <property type="entry name" value="ANNEXIN"/>
</dbReference>
<dbReference type="SMART" id="SM00335">
    <property type="entry name" value="ANX"/>
    <property type="match status" value="4"/>
</dbReference>
<dbReference type="SUPFAM" id="SSF47874">
    <property type="entry name" value="Annexin"/>
    <property type="match status" value="1"/>
</dbReference>
<dbReference type="PROSITE" id="PS00223">
    <property type="entry name" value="ANNEXIN_1"/>
    <property type="match status" value="1"/>
</dbReference>
<dbReference type="PROSITE" id="PS51897">
    <property type="entry name" value="ANNEXIN_2"/>
    <property type="match status" value="4"/>
</dbReference>
<gene>
    <name type="primary">ANN5</name>
    <name type="synonym">ANNAT5</name>
    <name type="ordered locus">At1g68090</name>
    <name type="ORF">T23K23.6</name>
</gene>
<comment type="tissue specificity">
    <text evidence="5">Expressed mainly in roots and flowers. Lower in stems and leaves.</text>
</comment>
<comment type="induction">
    <text evidence="6">Up-regulated by cold, heat shock, dehydration and salt stresses.</text>
</comment>
<comment type="domain">
    <text>A pair of annexin repeats may form one binding site for calcium and phospholipid.</text>
</comment>
<comment type="similarity">
    <text evidence="7">Belongs to the annexin (TC 1.A.31.1) family.</text>
</comment>
<comment type="sequence caution" evidence="7">
    <conflict type="erroneous termination">
        <sequence resource="EMBL-CDS" id="ABK28456"/>
    </conflict>
    <text>Extended C-terminus.</text>
</comment>
<sequence length="316" mass="35993">MATMKIPMTVPSPRVDADQLFKAFKGRGCDTSVIINILAHRNATQRALIEQEYETKFSDDLRKRLHSELHGHLKKAVLLWMPEAVERDASILKRSLRGAVTDHKAIAEIICTRSGSQLRQIKQVYSNTFGVKLEEDIESEASGNHKRVLLAYLNTTRYEGPEIDNASVENDARTLKSAVARKHKSDDQTLIQIFTDRSRTHLVAVRSTYRSMYGKELGKAIRDETRGNFEHVLLTILQCAENSCFYFAKALRKSMKGLGTDDTALIRIVVTRAEVDMQFIITEYRKRYKKTLYNAVHSDTTSHYRTFLLSLLGPNV</sequence>
<proteinExistence type="evidence at transcript level"/>
<reference key="1">
    <citation type="journal article" date="2001" name="Plant Physiol.">
        <title>Differential expression of members of the annexin multigene family in Arabidopsis.</title>
        <authorList>
            <person name="Clark G.B."/>
            <person name="Sessions A."/>
            <person name="Eastburn D.J."/>
            <person name="Roux S.J."/>
        </authorList>
    </citation>
    <scope>NUCLEOTIDE SEQUENCE [MRNA]</scope>
    <scope>TISSUE SPECIFICITY</scope>
</reference>
<reference key="2">
    <citation type="journal article" date="2000" name="Nature">
        <title>Sequence and analysis of chromosome 1 of the plant Arabidopsis thaliana.</title>
        <authorList>
            <person name="Theologis A."/>
            <person name="Ecker J.R."/>
            <person name="Palm C.J."/>
            <person name="Federspiel N.A."/>
            <person name="Kaul S."/>
            <person name="White O."/>
            <person name="Alonso J."/>
            <person name="Altafi H."/>
            <person name="Araujo R."/>
            <person name="Bowman C.L."/>
            <person name="Brooks S.Y."/>
            <person name="Buehler E."/>
            <person name="Chan A."/>
            <person name="Chao Q."/>
            <person name="Chen H."/>
            <person name="Cheuk R.F."/>
            <person name="Chin C.W."/>
            <person name="Chung M.K."/>
            <person name="Conn L."/>
            <person name="Conway A.B."/>
            <person name="Conway A.R."/>
            <person name="Creasy T.H."/>
            <person name="Dewar K."/>
            <person name="Dunn P."/>
            <person name="Etgu P."/>
            <person name="Feldblyum T.V."/>
            <person name="Feng J.-D."/>
            <person name="Fong B."/>
            <person name="Fujii C.Y."/>
            <person name="Gill J.E."/>
            <person name="Goldsmith A.D."/>
            <person name="Haas B."/>
            <person name="Hansen N.F."/>
            <person name="Hughes B."/>
            <person name="Huizar L."/>
            <person name="Hunter J.L."/>
            <person name="Jenkins J."/>
            <person name="Johnson-Hopson C."/>
            <person name="Khan S."/>
            <person name="Khaykin E."/>
            <person name="Kim C.J."/>
            <person name="Koo H.L."/>
            <person name="Kremenetskaia I."/>
            <person name="Kurtz D.B."/>
            <person name="Kwan A."/>
            <person name="Lam B."/>
            <person name="Langin-Hooper S."/>
            <person name="Lee A."/>
            <person name="Lee J.M."/>
            <person name="Lenz C.A."/>
            <person name="Li J.H."/>
            <person name="Li Y.-P."/>
            <person name="Lin X."/>
            <person name="Liu S.X."/>
            <person name="Liu Z.A."/>
            <person name="Luros J.S."/>
            <person name="Maiti R."/>
            <person name="Marziali A."/>
            <person name="Militscher J."/>
            <person name="Miranda M."/>
            <person name="Nguyen M."/>
            <person name="Nierman W.C."/>
            <person name="Osborne B.I."/>
            <person name="Pai G."/>
            <person name="Peterson J."/>
            <person name="Pham P.K."/>
            <person name="Rizzo M."/>
            <person name="Rooney T."/>
            <person name="Rowley D."/>
            <person name="Sakano H."/>
            <person name="Salzberg S.L."/>
            <person name="Schwartz J.R."/>
            <person name="Shinn P."/>
            <person name="Southwick A.M."/>
            <person name="Sun H."/>
            <person name="Tallon L.J."/>
            <person name="Tambunga G."/>
            <person name="Toriumi M.J."/>
            <person name="Town C.D."/>
            <person name="Utterback T."/>
            <person name="Van Aken S."/>
            <person name="Vaysberg M."/>
            <person name="Vysotskaia V.S."/>
            <person name="Walker M."/>
            <person name="Wu D."/>
            <person name="Yu G."/>
            <person name="Fraser C.M."/>
            <person name="Venter J.C."/>
            <person name="Davis R.W."/>
        </authorList>
    </citation>
    <scope>NUCLEOTIDE SEQUENCE [LARGE SCALE GENOMIC DNA]</scope>
    <source>
        <strain>cv. Columbia</strain>
    </source>
</reference>
<reference key="3">
    <citation type="journal article" date="2017" name="Plant J.">
        <title>Araport11: a complete reannotation of the Arabidopsis thaliana reference genome.</title>
        <authorList>
            <person name="Cheng C.Y."/>
            <person name="Krishnakumar V."/>
            <person name="Chan A.P."/>
            <person name="Thibaud-Nissen F."/>
            <person name="Schobel S."/>
            <person name="Town C.D."/>
        </authorList>
    </citation>
    <scope>GENOME REANNOTATION</scope>
    <source>
        <strain>cv. Columbia</strain>
    </source>
</reference>
<reference key="4">
    <citation type="journal article" date="2006" name="Plant Biotechnol. J.">
        <title>Simultaneous high-throughput recombinational cloning of open reading frames in closed and open configurations.</title>
        <authorList>
            <person name="Underwood B.A."/>
            <person name="Vanderhaeghen R."/>
            <person name="Whitford R."/>
            <person name="Town C.D."/>
            <person name="Hilson P."/>
        </authorList>
    </citation>
    <scope>NUCLEOTIDE SEQUENCE [LARGE SCALE MRNA]</scope>
    <source>
        <strain>cv. Columbia</strain>
    </source>
</reference>
<reference key="5">
    <citation type="journal article" date="2006" name="Plant Physiol. Biochem.">
        <title>Expression profiling of the Arabidopsis annexin gene family during germination, de-etiolation and abiotic stress.</title>
        <authorList>
            <person name="Cantero A."/>
            <person name="Barthakur S."/>
            <person name="Bushart T.J."/>
            <person name="Chou S."/>
            <person name="Morgan R.O."/>
            <person name="Fernandez M.P."/>
            <person name="Clark G.B."/>
            <person name="Roux S.J."/>
        </authorList>
    </citation>
    <scope>INDUCTION</scope>
    <scope>GENE FAMILY</scope>
</reference>
<evidence type="ECO:0000250" key="1">
    <source>
        <dbReference type="UniProtKB" id="P93157"/>
    </source>
</evidence>
<evidence type="ECO:0000250" key="2">
    <source>
        <dbReference type="UniProtKB" id="Q9SYT0"/>
    </source>
</evidence>
<evidence type="ECO:0000250" key="3">
    <source>
        <dbReference type="UniProtKB" id="Q9XEE2"/>
    </source>
</evidence>
<evidence type="ECO:0000255" key="4">
    <source>
        <dbReference type="PROSITE-ProRule" id="PRU01245"/>
    </source>
</evidence>
<evidence type="ECO:0000269" key="5">
    <source>
    </source>
</evidence>
<evidence type="ECO:0000269" key="6">
    <source>
    </source>
</evidence>
<evidence type="ECO:0000305" key="7"/>
<organism>
    <name type="scientific">Arabidopsis thaliana</name>
    <name type="common">Mouse-ear cress</name>
    <dbReference type="NCBI Taxonomy" id="3702"/>
    <lineage>
        <taxon>Eukaryota</taxon>
        <taxon>Viridiplantae</taxon>
        <taxon>Streptophyta</taxon>
        <taxon>Embryophyta</taxon>
        <taxon>Tracheophyta</taxon>
        <taxon>Spermatophyta</taxon>
        <taxon>Magnoliopsida</taxon>
        <taxon>eudicotyledons</taxon>
        <taxon>Gunneridae</taxon>
        <taxon>Pentapetalae</taxon>
        <taxon>rosids</taxon>
        <taxon>malvids</taxon>
        <taxon>Brassicales</taxon>
        <taxon>Brassicaceae</taxon>
        <taxon>Camelineae</taxon>
        <taxon>Arabidopsis</taxon>
    </lineage>
</organism>
<name>ANXD5_ARATH</name>
<accession>Q9C9X3</accession>
<accession>A0MEF1</accession>
<accession>Q1PFF4</accession>
<accession>Q9C5V4</accession>
<protein>
    <recommendedName>
        <fullName>Annexin D5</fullName>
    </recommendedName>
    <alternativeName>
        <fullName>AnnAt5</fullName>
    </alternativeName>
</protein>
<keyword id="KW-0007">Acetylation</keyword>
<keyword id="KW-0041">Annexin</keyword>
<keyword id="KW-0106">Calcium</keyword>
<keyword id="KW-0111">Calcium/phospholipid-binding</keyword>
<keyword id="KW-0479">Metal-binding</keyword>
<keyword id="KW-0597">Phosphoprotein</keyword>
<keyword id="KW-1185">Reference proteome</keyword>
<keyword id="KW-0677">Repeat</keyword>
<feature type="initiator methionine" description="Removed" evidence="2">
    <location>
        <position position="1"/>
    </location>
</feature>
<feature type="chain" id="PRO_0000278819" description="Annexin D5">
    <location>
        <begin position="2"/>
        <end position="316"/>
    </location>
</feature>
<feature type="repeat" description="Annexin 1" evidence="4">
    <location>
        <begin position="11"/>
        <end position="82"/>
    </location>
</feature>
<feature type="repeat" description="Annexin 2" evidence="4">
    <location>
        <begin position="83"/>
        <end position="154"/>
    </location>
</feature>
<feature type="repeat" description="Annexin 3" evidence="4">
    <location>
        <begin position="166"/>
        <end position="238"/>
    </location>
</feature>
<feature type="repeat" description="Annexin 4" evidence="4">
    <location>
        <begin position="242"/>
        <end position="313"/>
    </location>
</feature>
<feature type="binding site" evidence="1">
    <location>
        <position position="24"/>
    </location>
    <ligand>
        <name>Ca(2+)</name>
        <dbReference type="ChEBI" id="CHEBI:29108"/>
        <label>1</label>
    </ligand>
</feature>
<feature type="binding site" evidence="1">
    <location>
        <position position="26"/>
    </location>
    <ligand>
        <name>Ca(2+)</name>
        <dbReference type="ChEBI" id="CHEBI:29108"/>
        <label>1</label>
    </ligand>
</feature>
<feature type="binding site" evidence="1">
    <location>
        <position position="28"/>
    </location>
    <ligand>
        <name>Ca(2+)</name>
        <dbReference type="ChEBI" id="CHEBI:29108"/>
        <label>1</label>
    </ligand>
</feature>
<feature type="binding site" evidence="1">
    <location>
        <position position="68"/>
    </location>
    <ligand>
        <name>Ca(2+)</name>
        <dbReference type="ChEBI" id="CHEBI:29108"/>
        <label>1</label>
    </ligand>
</feature>
<feature type="binding site" evidence="1">
    <location>
        <position position="259"/>
    </location>
    <ligand>
        <name>Ca(2+)</name>
        <dbReference type="ChEBI" id="CHEBI:29108"/>
        <label>2</label>
    </ligand>
</feature>
<feature type="binding site" evidence="1">
    <location>
        <position position="299"/>
    </location>
    <ligand>
        <name>Ca(2+)</name>
        <dbReference type="ChEBI" id="CHEBI:29108"/>
        <label>2</label>
    </ligand>
</feature>
<feature type="binding site" evidence="1">
    <location>
        <position position="300"/>
    </location>
    <ligand>
        <name>Ca(2+)</name>
        <dbReference type="ChEBI" id="CHEBI:29108"/>
        <label>3</label>
    </ligand>
</feature>
<feature type="modified residue" description="N-acetylalanine" evidence="2">
    <location>
        <position position="2"/>
    </location>
</feature>
<feature type="modified residue" description="Phosphoserine" evidence="3">
    <location>
        <position position="95"/>
    </location>
</feature>
<feature type="modified residue" description="Phosphothreonine" evidence="2">
    <location>
        <position position="112"/>
    </location>
</feature>
<feature type="modified residue" description="Phosphotyrosine" evidence="2">
    <location>
        <position position="284"/>
    </location>
</feature>
<feature type="sequence conflict" description="In Ref. 2; AAG52011." evidence="7" ref="2">
    <original>R</original>
    <variation>T</variation>
    <location>
        <position position="27"/>
    </location>
</feature>
<feature type="sequence conflict" description="In Ref. 1; AAG61154." evidence="7" ref="1">
    <original>I</original>
    <variation>M</variation>
    <location>
        <position position="110"/>
    </location>
</feature>